<reference key="1">
    <citation type="journal article" date="2001" name="Proc. Natl. Acad. Sci. U.S.A.">
        <title>Analysis of the chromosome sequence of the legume symbiont Sinorhizobium meliloti strain 1021.</title>
        <authorList>
            <person name="Capela D."/>
            <person name="Barloy-Hubler F."/>
            <person name="Gouzy J."/>
            <person name="Bothe G."/>
            <person name="Ampe F."/>
            <person name="Batut J."/>
            <person name="Boistard P."/>
            <person name="Becker A."/>
            <person name="Boutry M."/>
            <person name="Cadieu E."/>
            <person name="Dreano S."/>
            <person name="Gloux S."/>
            <person name="Godrie T."/>
            <person name="Goffeau A."/>
            <person name="Kahn D."/>
            <person name="Kiss E."/>
            <person name="Lelaure V."/>
            <person name="Masuy D."/>
            <person name="Pohl T."/>
            <person name="Portetelle D."/>
            <person name="Puehler A."/>
            <person name="Purnelle B."/>
            <person name="Ramsperger U."/>
            <person name="Renard C."/>
            <person name="Thebault P."/>
            <person name="Vandenbol M."/>
            <person name="Weidner S."/>
            <person name="Galibert F."/>
        </authorList>
    </citation>
    <scope>NUCLEOTIDE SEQUENCE [LARGE SCALE GENOMIC DNA]</scope>
    <source>
        <strain>1021</strain>
    </source>
</reference>
<reference key="2">
    <citation type="journal article" date="2001" name="Science">
        <title>The composite genome of the legume symbiont Sinorhizobium meliloti.</title>
        <authorList>
            <person name="Galibert F."/>
            <person name="Finan T.M."/>
            <person name="Long S.R."/>
            <person name="Puehler A."/>
            <person name="Abola P."/>
            <person name="Ampe F."/>
            <person name="Barloy-Hubler F."/>
            <person name="Barnett M.J."/>
            <person name="Becker A."/>
            <person name="Boistard P."/>
            <person name="Bothe G."/>
            <person name="Boutry M."/>
            <person name="Bowser L."/>
            <person name="Buhrmester J."/>
            <person name="Cadieu E."/>
            <person name="Capela D."/>
            <person name="Chain P."/>
            <person name="Cowie A."/>
            <person name="Davis R.W."/>
            <person name="Dreano S."/>
            <person name="Federspiel N.A."/>
            <person name="Fisher R.F."/>
            <person name="Gloux S."/>
            <person name="Godrie T."/>
            <person name="Goffeau A."/>
            <person name="Golding B."/>
            <person name="Gouzy J."/>
            <person name="Gurjal M."/>
            <person name="Hernandez-Lucas I."/>
            <person name="Hong A."/>
            <person name="Huizar L."/>
            <person name="Hyman R.W."/>
            <person name="Jones T."/>
            <person name="Kahn D."/>
            <person name="Kahn M.L."/>
            <person name="Kalman S."/>
            <person name="Keating D.H."/>
            <person name="Kiss E."/>
            <person name="Komp C."/>
            <person name="Lelaure V."/>
            <person name="Masuy D."/>
            <person name="Palm C."/>
            <person name="Peck M.C."/>
            <person name="Pohl T.M."/>
            <person name="Portetelle D."/>
            <person name="Purnelle B."/>
            <person name="Ramsperger U."/>
            <person name="Surzycki R."/>
            <person name="Thebault P."/>
            <person name="Vandenbol M."/>
            <person name="Vorhoelter F.J."/>
            <person name="Weidner S."/>
            <person name="Wells D.H."/>
            <person name="Wong K."/>
            <person name="Yeh K.-C."/>
            <person name="Batut J."/>
        </authorList>
    </citation>
    <scope>NUCLEOTIDE SEQUENCE [LARGE SCALE GENOMIC DNA]</scope>
    <source>
        <strain>1021</strain>
    </source>
</reference>
<protein>
    <recommendedName>
        <fullName evidence="1">Triosephosphate isomerase</fullName>
        <shortName evidence="1">TIM</shortName>
        <shortName evidence="1">TPI</shortName>
        <ecNumber evidence="1">5.3.1.1</ecNumber>
    </recommendedName>
    <alternativeName>
        <fullName evidence="1">Triose-phosphate isomerase</fullName>
    </alternativeName>
</protein>
<feature type="chain" id="PRO_0000090276" description="Triosephosphate isomerase">
    <location>
        <begin position="1"/>
        <end position="256"/>
    </location>
</feature>
<feature type="active site" description="Electrophile" evidence="1">
    <location>
        <position position="99"/>
    </location>
</feature>
<feature type="active site" description="Proton acceptor" evidence="1">
    <location>
        <position position="169"/>
    </location>
</feature>
<feature type="binding site" evidence="1">
    <location>
        <begin position="12"/>
        <end position="14"/>
    </location>
    <ligand>
        <name>substrate</name>
    </ligand>
</feature>
<feature type="binding site" evidence="1">
    <location>
        <position position="175"/>
    </location>
    <ligand>
        <name>substrate</name>
    </ligand>
</feature>
<feature type="binding site" evidence="1">
    <location>
        <position position="214"/>
    </location>
    <ligand>
        <name>substrate</name>
    </ligand>
</feature>
<feature type="binding site" evidence="1">
    <location>
        <begin position="235"/>
        <end position="236"/>
    </location>
    <ligand>
        <name>substrate</name>
    </ligand>
</feature>
<gene>
    <name evidence="1" type="primary">tpiA</name>
    <name type="ordered locus">R01438</name>
    <name type="ORF">SMc01023</name>
</gene>
<proteinExistence type="inferred from homology"/>
<evidence type="ECO:0000255" key="1">
    <source>
        <dbReference type="HAMAP-Rule" id="MF_00147"/>
    </source>
</evidence>
<keyword id="KW-0963">Cytoplasm</keyword>
<keyword id="KW-0312">Gluconeogenesis</keyword>
<keyword id="KW-0324">Glycolysis</keyword>
<keyword id="KW-0413">Isomerase</keyword>
<keyword id="KW-1185">Reference proteome</keyword>
<name>TPIS_RHIME</name>
<organism>
    <name type="scientific">Rhizobium meliloti (strain 1021)</name>
    <name type="common">Ensifer meliloti</name>
    <name type="synonym">Sinorhizobium meliloti</name>
    <dbReference type="NCBI Taxonomy" id="266834"/>
    <lineage>
        <taxon>Bacteria</taxon>
        <taxon>Pseudomonadati</taxon>
        <taxon>Pseudomonadota</taxon>
        <taxon>Alphaproteobacteria</taxon>
        <taxon>Hyphomicrobiales</taxon>
        <taxon>Rhizobiaceae</taxon>
        <taxon>Sinorhizobium/Ensifer group</taxon>
        <taxon>Sinorhizobium</taxon>
    </lineage>
</organism>
<sequence>MTPDIRPLVAGNWKMNGTRASLDQIKAMAEGVKGDLSARVDALICPPATLLYVATALCDDSPLMIGAQDCHQKQSGAHTGEVSAEMVADCFGTHVIVGHSERRTDHGEGDALVRAKTEAAHGADLVAIVCVGETEEERKAGRTLDILKRQLSESLPDQATAENTVIAYEPVWAIGTGLTPTVSDVEEAHAFMRRELVSRFGAEGGKMRILYGGSVKPSNAKELMGVANVDGALIGGASLKADDFLAIYRAYEELTA</sequence>
<accession>Q92QA1</accession>
<dbReference type="EC" id="5.3.1.1" evidence="1"/>
<dbReference type="EMBL" id="AL591688">
    <property type="protein sequence ID" value="CAC46017.1"/>
    <property type="molecule type" value="Genomic_DNA"/>
</dbReference>
<dbReference type="RefSeq" id="NP_385544.1">
    <property type="nucleotide sequence ID" value="NC_003047.1"/>
</dbReference>
<dbReference type="RefSeq" id="WP_010969225.1">
    <property type="nucleotide sequence ID" value="NC_003047.1"/>
</dbReference>
<dbReference type="SMR" id="Q92QA1"/>
<dbReference type="EnsemblBacteria" id="CAC46017">
    <property type="protein sequence ID" value="CAC46017"/>
    <property type="gene ID" value="SMc01023"/>
</dbReference>
<dbReference type="KEGG" id="sme:SMc01023"/>
<dbReference type="PATRIC" id="fig|266834.11.peg.2858"/>
<dbReference type="eggNOG" id="COG0149">
    <property type="taxonomic scope" value="Bacteria"/>
</dbReference>
<dbReference type="HOGENOM" id="CLU_024251_2_1_5"/>
<dbReference type="OrthoDB" id="9809429at2"/>
<dbReference type="UniPathway" id="UPA00109">
    <property type="reaction ID" value="UER00189"/>
</dbReference>
<dbReference type="UniPathway" id="UPA00138"/>
<dbReference type="Proteomes" id="UP000001976">
    <property type="component" value="Chromosome"/>
</dbReference>
<dbReference type="GO" id="GO:0005829">
    <property type="term" value="C:cytosol"/>
    <property type="evidence" value="ECO:0007669"/>
    <property type="project" value="TreeGrafter"/>
</dbReference>
<dbReference type="GO" id="GO:0004807">
    <property type="term" value="F:triose-phosphate isomerase activity"/>
    <property type="evidence" value="ECO:0007669"/>
    <property type="project" value="UniProtKB-UniRule"/>
</dbReference>
<dbReference type="GO" id="GO:0006094">
    <property type="term" value="P:gluconeogenesis"/>
    <property type="evidence" value="ECO:0007669"/>
    <property type="project" value="UniProtKB-UniRule"/>
</dbReference>
<dbReference type="GO" id="GO:0046166">
    <property type="term" value="P:glyceraldehyde-3-phosphate biosynthetic process"/>
    <property type="evidence" value="ECO:0007669"/>
    <property type="project" value="TreeGrafter"/>
</dbReference>
<dbReference type="GO" id="GO:0019563">
    <property type="term" value="P:glycerol catabolic process"/>
    <property type="evidence" value="ECO:0007669"/>
    <property type="project" value="TreeGrafter"/>
</dbReference>
<dbReference type="GO" id="GO:0006096">
    <property type="term" value="P:glycolytic process"/>
    <property type="evidence" value="ECO:0007669"/>
    <property type="project" value="UniProtKB-UniRule"/>
</dbReference>
<dbReference type="CDD" id="cd00311">
    <property type="entry name" value="TIM"/>
    <property type="match status" value="1"/>
</dbReference>
<dbReference type="FunFam" id="3.20.20.70:FF:000016">
    <property type="entry name" value="Triosephosphate isomerase"/>
    <property type="match status" value="1"/>
</dbReference>
<dbReference type="Gene3D" id="3.20.20.70">
    <property type="entry name" value="Aldolase class I"/>
    <property type="match status" value="1"/>
</dbReference>
<dbReference type="HAMAP" id="MF_00147_B">
    <property type="entry name" value="TIM_B"/>
    <property type="match status" value="1"/>
</dbReference>
<dbReference type="InterPro" id="IPR013785">
    <property type="entry name" value="Aldolase_TIM"/>
</dbReference>
<dbReference type="InterPro" id="IPR035990">
    <property type="entry name" value="TIM_sf"/>
</dbReference>
<dbReference type="InterPro" id="IPR022896">
    <property type="entry name" value="TrioseP_Isoase_bac/euk"/>
</dbReference>
<dbReference type="InterPro" id="IPR000652">
    <property type="entry name" value="Triosephosphate_isomerase"/>
</dbReference>
<dbReference type="InterPro" id="IPR020861">
    <property type="entry name" value="Triosephosphate_isomerase_AS"/>
</dbReference>
<dbReference type="NCBIfam" id="TIGR00419">
    <property type="entry name" value="tim"/>
    <property type="match status" value="1"/>
</dbReference>
<dbReference type="PANTHER" id="PTHR21139">
    <property type="entry name" value="TRIOSEPHOSPHATE ISOMERASE"/>
    <property type="match status" value="1"/>
</dbReference>
<dbReference type="PANTHER" id="PTHR21139:SF42">
    <property type="entry name" value="TRIOSEPHOSPHATE ISOMERASE"/>
    <property type="match status" value="1"/>
</dbReference>
<dbReference type="Pfam" id="PF00121">
    <property type="entry name" value="TIM"/>
    <property type="match status" value="1"/>
</dbReference>
<dbReference type="SUPFAM" id="SSF51351">
    <property type="entry name" value="Triosephosphate isomerase (TIM)"/>
    <property type="match status" value="1"/>
</dbReference>
<dbReference type="PROSITE" id="PS00171">
    <property type="entry name" value="TIM_1"/>
    <property type="match status" value="1"/>
</dbReference>
<dbReference type="PROSITE" id="PS51440">
    <property type="entry name" value="TIM_2"/>
    <property type="match status" value="1"/>
</dbReference>
<comment type="function">
    <text evidence="1">Involved in the gluconeogenesis. Catalyzes stereospecifically the conversion of dihydroxyacetone phosphate (DHAP) to D-glyceraldehyde-3-phosphate (G3P).</text>
</comment>
<comment type="catalytic activity">
    <reaction evidence="1">
        <text>D-glyceraldehyde 3-phosphate = dihydroxyacetone phosphate</text>
        <dbReference type="Rhea" id="RHEA:18585"/>
        <dbReference type="ChEBI" id="CHEBI:57642"/>
        <dbReference type="ChEBI" id="CHEBI:59776"/>
        <dbReference type="EC" id="5.3.1.1"/>
    </reaction>
</comment>
<comment type="pathway">
    <text evidence="1">Carbohydrate biosynthesis; gluconeogenesis.</text>
</comment>
<comment type="pathway">
    <text evidence="1">Carbohydrate degradation; glycolysis; D-glyceraldehyde 3-phosphate from glycerone phosphate: step 1/1.</text>
</comment>
<comment type="subunit">
    <text evidence="1">Homodimer.</text>
</comment>
<comment type="subcellular location">
    <subcellularLocation>
        <location evidence="1">Cytoplasm</location>
    </subcellularLocation>
</comment>
<comment type="similarity">
    <text evidence="1">Belongs to the triosephosphate isomerase family.</text>
</comment>